<proteinExistence type="inferred from homology"/>
<evidence type="ECO:0000250" key="1">
    <source>
        <dbReference type="UniProtKB" id="P69795"/>
    </source>
</evidence>
<evidence type="ECO:0000255" key="2">
    <source>
        <dbReference type="PROSITE-ProRule" id="PRU00423"/>
    </source>
</evidence>
<evidence type="ECO:0000305" key="3"/>
<name>PTQB_ECO57</name>
<accession>P69830</accession>
<accession>P17409</accession>
<dbReference type="EC" id="2.7.1.196" evidence="1"/>
<dbReference type="EMBL" id="AE005174">
    <property type="protein sequence ID" value="AAG56724.1"/>
    <property type="molecule type" value="Genomic_DNA"/>
</dbReference>
<dbReference type="EMBL" id="BA000007">
    <property type="protein sequence ID" value="BAB35867.1"/>
    <property type="molecule type" value="Genomic_DNA"/>
</dbReference>
<dbReference type="PIR" id="D90934">
    <property type="entry name" value="D90934"/>
</dbReference>
<dbReference type="PIR" id="H85782">
    <property type="entry name" value="H85782"/>
</dbReference>
<dbReference type="RefSeq" id="NP_310471.1">
    <property type="nucleotide sequence ID" value="NC_002695.1"/>
</dbReference>
<dbReference type="RefSeq" id="WP_000412169.1">
    <property type="nucleotide sequence ID" value="NZ_VOAI01000007.1"/>
</dbReference>
<dbReference type="BMRB" id="P69830"/>
<dbReference type="SMR" id="P69830"/>
<dbReference type="STRING" id="155864.Z2768"/>
<dbReference type="GeneID" id="912602"/>
<dbReference type="GeneID" id="93775951"/>
<dbReference type="KEGG" id="ece:Z2768"/>
<dbReference type="KEGG" id="ecs:ECs_2444"/>
<dbReference type="PATRIC" id="fig|386585.9.peg.2558"/>
<dbReference type="eggNOG" id="COG1440">
    <property type="taxonomic scope" value="Bacteria"/>
</dbReference>
<dbReference type="HOGENOM" id="CLU_147323_2_0_6"/>
<dbReference type="OMA" id="YKIWAVS"/>
<dbReference type="Proteomes" id="UP000000558">
    <property type="component" value="Chromosome"/>
</dbReference>
<dbReference type="Proteomes" id="UP000002519">
    <property type="component" value="Chromosome"/>
</dbReference>
<dbReference type="GO" id="GO:0005737">
    <property type="term" value="C:cytoplasm"/>
    <property type="evidence" value="ECO:0007669"/>
    <property type="project" value="UniProtKB-SubCell"/>
</dbReference>
<dbReference type="GO" id="GO:0016301">
    <property type="term" value="F:kinase activity"/>
    <property type="evidence" value="ECO:0007669"/>
    <property type="project" value="UniProtKB-KW"/>
</dbReference>
<dbReference type="GO" id="GO:0008982">
    <property type="term" value="F:protein-N(PI)-phosphohistidine-sugar phosphotransferase activity"/>
    <property type="evidence" value="ECO:0007669"/>
    <property type="project" value="InterPro"/>
</dbReference>
<dbReference type="GO" id="GO:0009401">
    <property type="term" value="P:phosphoenolpyruvate-dependent sugar phosphotransferase system"/>
    <property type="evidence" value="ECO:0007669"/>
    <property type="project" value="UniProtKB-KW"/>
</dbReference>
<dbReference type="CDD" id="cd05564">
    <property type="entry name" value="PTS_IIB_chitobiose_lichenan"/>
    <property type="match status" value="1"/>
</dbReference>
<dbReference type="FunFam" id="3.40.50.2300:FF:000017">
    <property type="entry name" value="PTS sugar transporter subunit IIB"/>
    <property type="match status" value="1"/>
</dbReference>
<dbReference type="Gene3D" id="3.40.50.2300">
    <property type="match status" value="1"/>
</dbReference>
<dbReference type="InterPro" id="IPR036095">
    <property type="entry name" value="PTS_EIIB-like_sf"/>
</dbReference>
<dbReference type="InterPro" id="IPR003501">
    <property type="entry name" value="PTS_EIIB_2/3"/>
</dbReference>
<dbReference type="InterPro" id="IPR013012">
    <property type="entry name" value="PTS_EIIB_3"/>
</dbReference>
<dbReference type="InterPro" id="IPR051819">
    <property type="entry name" value="PTS_sugar-specific_EIIB"/>
</dbReference>
<dbReference type="NCBIfam" id="NF007796">
    <property type="entry name" value="PRK10499.1"/>
    <property type="match status" value="1"/>
</dbReference>
<dbReference type="NCBIfam" id="TIGR00853">
    <property type="entry name" value="pts-lac"/>
    <property type="match status" value="1"/>
</dbReference>
<dbReference type="PANTHER" id="PTHR34581">
    <property type="entry name" value="PTS SYSTEM N,N'-DIACETYLCHITOBIOSE-SPECIFIC EIIB COMPONENT"/>
    <property type="match status" value="1"/>
</dbReference>
<dbReference type="PANTHER" id="PTHR34581:SF2">
    <property type="entry name" value="PTS SYSTEM N,N'-DIACETYLCHITOBIOSE-SPECIFIC EIIB COMPONENT"/>
    <property type="match status" value="1"/>
</dbReference>
<dbReference type="Pfam" id="PF02302">
    <property type="entry name" value="PTS_IIB"/>
    <property type="match status" value="1"/>
</dbReference>
<dbReference type="SUPFAM" id="SSF52794">
    <property type="entry name" value="PTS system IIB component-like"/>
    <property type="match status" value="1"/>
</dbReference>
<dbReference type="PROSITE" id="PS51100">
    <property type="entry name" value="PTS_EIIB_TYPE_3"/>
    <property type="match status" value="1"/>
</dbReference>
<comment type="function">
    <text evidence="1">The phosphoenolpyruvate-dependent sugar phosphotransferase system (sugar PTS), a major carbohydrate active transport system, catalyzes the phosphorylation of incoming sugar substrates concomitantly with their translocation across the cell membrane. The enzyme II ChbABC PTS system is involved in the transport of the chitin disaccharide N,N'-diacetylchitobiose (GlcNAc2).</text>
</comment>
<comment type="catalytic activity">
    <reaction evidence="1">
        <text>N,N'-diacetylchitobiose(out) + N(pros)-phospho-L-histidyl-[protein] = diacetylchitobiose-6'-phosphate(in) + L-histidyl-[protein]</text>
        <dbReference type="Rhea" id="RHEA:33423"/>
        <dbReference type="Rhea" id="RHEA-COMP:9745"/>
        <dbReference type="Rhea" id="RHEA-COMP:9746"/>
        <dbReference type="ChEBI" id="CHEBI:28681"/>
        <dbReference type="ChEBI" id="CHEBI:29979"/>
        <dbReference type="ChEBI" id="CHEBI:64837"/>
        <dbReference type="ChEBI" id="CHEBI:64883"/>
        <dbReference type="EC" id="2.7.1.196"/>
    </reaction>
</comment>
<comment type="subunit">
    <text evidence="1">Forms a complex with ChbA (EIIA). ChbB is a monomer in both its unphosphorylated and phosphorylated forms.</text>
</comment>
<comment type="subcellular location">
    <subcellularLocation>
        <location evidence="3">Cytoplasm</location>
    </subcellularLocation>
</comment>
<comment type="induction">
    <text evidence="1">By GlcNAc2, GlcNAc3 and beta-N,N'-diacetylchitobiose (Me-TCB).</text>
</comment>
<comment type="domain">
    <text evidence="2">The PTS EIIB type-3 domain is phosphorylated by phospho-EIIA on a cysteinyl residue. Then, it transfers the phosphoryl group to the sugar substrate concomitantly with the sugar uptake processed by the PTS EIIC type-3 domain.</text>
</comment>
<keyword id="KW-0963">Cytoplasm</keyword>
<keyword id="KW-0418">Kinase</keyword>
<keyword id="KW-0597">Phosphoprotein</keyword>
<keyword id="KW-0598">Phosphotransferase system</keyword>
<keyword id="KW-1185">Reference proteome</keyword>
<keyword id="KW-0762">Sugar transport</keyword>
<keyword id="KW-0808">Transferase</keyword>
<keyword id="KW-0813">Transport</keyword>
<protein>
    <recommendedName>
        <fullName evidence="1">PTS system N,N'-diacetylchitobiose-specific EIIB component</fullName>
    </recommendedName>
    <alternativeName>
        <fullName evidence="1">EIIB-Chb</fullName>
    </alternativeName>
    <alternativeName>
        <fullName evidence="1">IVcel</fullName>
    </alternativeName>
    <alternativeName>
        <fullName evidence="1">N,N'-diacetylchitobiose-specific phosphotransferase enzyme IIB component</fullName>
        <ecNumber evidence="1">2.7.1.196</ecNumber>
    </alternativeName>
</protein>
<organism>
    <name type="scientific">Escherichia coli O157:H7</name>
    <dbReference type="NCBI Taxonomy" id="83334"/>
    <lineage>
        <taxon>Bacteria</taxon>
        <taxon>Pseudomonadati</taxon>
        <taxon>Pseudomonadota</taxon>
        <taxon>Gammaproteobacteria</taxon>
        <taxon>Enterobacterales</taxon>
        <taxon>Enterobacteriaceae</taxon>
        <taxon>Escherichia</taxon>
    </lineage>
</organism>
<reference key="1">
    <citation type="journal article" date="2001" name="Nature">
        <title>Genome sequence of enterohaemorrhagic Escherichia coli O157:H7.</title>
        <authorList>
            <person name="Perna N.T."/>
            <person name="Plunkett G. III"/>
            <person name="Burland V."/>
            <person name="Mau B."/>
            <person name="Glasner J.D."/>
            <person name="Rose D.J."/>
            <person name="Mayhew G.F."/>
            <person name="Evans P.S."/>
            <person name="Gregor J."/>
            <person name="Kirkpatrick H.A."/>
            <person name="Posfai G."/>
            <person name="Hackett J."/>
            <person name="Klink S."/>
            <person name="Boutin A."/>
            <person name="Shao Y."/>
            <person name="Miller L."/>
            <person name="Grotbeck E.J."/>
            <person name="Davis N.W."/>
            <person name="Lim A."/>
            <person name="Dimalanta E.T."/>
            <person name="Potamousis K."/>
            <person name="Apodaca J."/>
            <person name="Anantharaman T.S."/>
            <person name="Lin J."/>
            <person name="Yen G."/>
            <person name="Schwartz D.C."/>
            <person name="Welch R.A."/>
            <person name="Blattner F.R."/>
        </authorList>
    </citation>
    <scope>NUCLEOTIDE SEQUENCE [LARGE SCALE GENOMIC DNA]</scope>
    <source>
        <strain>O157:H7 / EDL933 / ATCC 700927 / EHEC</strain>
    </source>
</reference>
<reference key="2">
    <citation type="journal article" date="2001" name="DNA Res.">
        <title>Complete genome sequence of enterohemorrhagic Escherichia coli O157:H7 and genomic comparison with a laboratory strain K-12.</title>
        <authorList>
            <person name="Hayashi T."/>
            <person name="Makino K."/>
            <person name="Ohnishi M."/>
            <person name="Kurokawa K."/>
            <person name="Ishii K."/>
            <person name="Yokoyama K."/>
            <person name="Han C.-G."/>
            <person name="Ohtsubo E."/>
            <person name="Nakayama K."/>
            <person name="Murata T."/>
            <person name="Tanaka M."/>
            <person name="Tobe T."/>
            <person name="Iida T."/>
            <person name="Takami H."/>
            <person name="Honda T."/>
            <person name="Sasakawa C."/>
            <person name="Ogasawara N."/>
            <person name="Yasunaga T."/>
            <person name="Kuhara S."/>
            <person name="Shiba T."/>
            <person name="Hattori M."/>
            <person name="Shinagawa H."/>
        </authorList>
    </citation>
    <scope>NUCLEOTIDE SEQUENCE [LARGE SCALE GENOMIC DNA]</scope>
    <source>
        <strain>O157:H7 / Sakai / RIMD 0509952 / EHEC</strain>
    </source>
</reference>
<feature type="chain" id="PRO_0000186491" description="PTS system N,N'-diacetylchitobiose-specific EIIB component">
    <location>
        <begin position="1"/>
        <end position="106"/>
    </location>
</feature>
<feature type="domain" description="PTS EIIB type-3" evidence="2">
    <location>
        <begin position="3"/>
        <end position="106"/>
    </location>
</feature>
<feature type="active site" description="Phosphocysteine intermediate" evidence="1">
    <location>
        <position position="10"/>
    </location>
</feature>
<feature type="modified residue" description="Phosphocysteine; by EIIA" evidence="2">
    <location>
        <position position="10"/>
    </location>
</feature>
<gene>
    <name type="primary">chbB</name>
    <name type="synonym">celA</name>
    <name type="ordered locus">Z2768</name>
    <name type="ordered locus">ECs2444</name>
</gene>
<sequence>MEKKHIYLFCSAGMSTSLLVSKMRAQAEKYEVPVIIEAFPETLAGEKGQNADVVLLGPQIAYMLPEIQRLLPNKPVEVIDSLLYGKVDGLGVLKAAVAAIKKAAAN</sequence>